<proteinExistence type="inferred from homology"/>
<dbReference type="EMBL" id="EF467316">
    <property type="status" value="NOT_ANNOTATED_CDS"/>
    <property type="molecule type" value="Genomic_DNA"/>
</dbReference>
<dbReference type="ConoServer" id="3723">
    <property type="toxin name" value="Lp6.3 precursor"/>
</dbReference>
<dbReference type="GO" id="GO:0005576">
    <property type="term" value="C:extracellular region"/>
    <property type="evidence" value="ECO:0007669"/>
    <property type="project" value="UniProtKB-SubCell"/>
</dbReference>
<dbReference type="GO" id="GO:0008200">
    <property type="term" value="F:ion channel inhibitor activity"/>
    <property type="evidence" value="ECO:0007669"/>
    <property type="project" value="InterPro"/>
</dbReference>
<dbReference type="GO" id="GO:0090729">
    <property type="term" value="F:toxin activity"/>
    <property type="evidence" value="ECO:0007669"/>
    <property type="project" value="UniProtKB-KW"/>
</dbReference>
<dbReference type="InterPro" id="IPR004214">
    <property type="entry name" value="Conotoxin"/>
</dbReference>
<dbReference type="Pfam" id="PF02950">
    <property type="entry name" value="Conotoxin"/>
    <property type="match status" value="1"/>
</dbReference>
<comment type="subcellular location">
    <subcellularLocation>
        <location evidence="6">Secreted</location>
    </subcellularLocation>
</comment>
<comment type="tissue specificity">
    <text evidence="6">Expressed by the venom duct.</text>
</comment>
<comment type="domain">
    <text evidence="1">The presence of a 'disulfide through disulfide knot' structurally defines this protein as a knottin.</text>
</comment>
<comment type="domain">
    <text evidence="5">The cysteine framework is VI/VII (C-C-CC-C-C).</text>
</comment>
<comment type="similarity">
    <text evidence="5">Belongs to the conotoxin O1 superfamily.</text>
</comment>
<protein>
    <recommendedName>
        <fullName evidence="4">Conotoxin Leo-O1</fullName>
    </recommendedName>
</protein>
<name>O161_CONLE</name>
<accession>P0C902</accession>
<evidence type="ECO:0000250" key="1"/>
<evidence type="ECO:0000250" key="2">
    <source>
        <dbReference type="UniProtKB" id="P18511"/>
    </source>
</evidence>
<evidence type="ECO:0000255" key="3"/>
<evidence type="ECO:0000303" key="4">
    <source>
    </source>
</evidence>
<evidence type="ECO:0000305" key="5"/>
<evidence type="ECO:0000305" key="6">
    <source>
    </source>
</evidence>
<organism>
    <name type="scientific">Conus leopardus</name>
    <name type="common">Leopard cone</name>
    <dbReference type="NCBI Taxonomy" id="101306"/>
    <lineage>
        <taxon>Eukaryota</taxon>
        <taxon>Metazoa</taxon>
        <taxon>Spiralia</taxon>
        <taxon>Lophotrochozoa</taxon>
        <taxon>Mollusca</taxon>
        <taxon>Gastropoda</taxon>
        <taxon>Caenogastropoda</taxon>
        <taxon>Neogastropoda</taxon>
        <taxon>Conoidea</taxon>
        <taxon>Conidae</taxon>
        <taxon>Conus</taxon>
        <taxon>Lithoconus</taxon>
    </lineage>
</organism>
<reference key="1">
    <citation type="journal article" date="2008" name="Mol. Ecol.">
        <title>Evolution of ecological specialization and venom of a predatory marine gastropod.</title>
        <authorList>
            <person name="Remigio E.A."/>
            <person name="Duda T.F. Jr."/>
        </authorList>
    </citation>
    <scope>NUCLEOTIDE SEQUENCE [GENOMIC DNA]</scope>
</reference>
<keyword id="KW-1015">Disulfide bond</keyword>
<keyword id="KW-0960">Knottin</keyword>
<keyword id="KW-0528">Neurotoxin</keyword>
<keyword id="KW-0964">Secreted</keyword>
<keyword id="KW-0732">Signal</keyword>
<keyword id="KW-0800">Toxin</keyword>
<sequence>MKLTCMMLVAVLFLTAWTFVTANVSRNGLENLFPEERHEMMNPEAAKLNNRDCVKAGTACGFPKPEPACCSSWCIFVCT</sequence>
<feature type="signal peptide" evidence="3">
    <location>
        <begin position="1"/>
        <end position="22"/>
    </location>
</feature>
<feature type="propeptide" id="PRO_0000368003" evidence="6">
    <location>
        <begin position="23"/>
        <end position="51"/>
    </location>
</feature>
<feature type="peptide" id="PRO_0000368004" description="Conotoxin Leo-O1" evidence="6">
    <location>
        <begin position="52"/>
        <end position="79"/>
    </location>
</feature>
<feature type="disulfide bond" evidence="2">
    <location>
        <begin position="53"/>
        <end position="70"/>
    </location>
</feature>
<feature type="disulfide bond" evidence="2">
    <location>
        <begin position="60"/>
        <end position="74"/>
    </location>
</feature>
<feature type="disulfide bond" evidence="2">
    <location>
        <begin position="69"/>
        <end position="78"/>
    </location>
</feature>